<proteinExistence type="evidence at protein level"/>
<evidence type="ECO:0000269" key="1">
    <source>
    </source>
</evidence>
<evidence type="ECO:0000269" key="2">
    <source ref="2"/>
</evidence>
<evidence type="ECO:0000305" key="3"/>
<accession>P34951</accession>
<accession>Q9LEI6</accession>
<name>IAAC_HORVU</name>
<dbReference type="EMBL" id="Y12069">
    <property type="protein sequence ID" value="CAA72791.1"/>
    <property type="molecule type" value="mRNA"/>
</dbReference>
<dbReference type="PIR" id="C24536">
    <property type="entry name" value="C24536"/>
</dbReference>
<dbReference type="SMR" id="P34951"/>
<dbReference type="ExpressionAtlas" id="P34951">
    <property type="expression patterns" value="baseline and differential"/>
</dbReference>
<dbReference type="GO" id="GO:0005576">
    <property type="term" value="C:extracellular region"/>
    <property type="evidence" value="ECO:0007669"/>
    <property type="project" value="UniProtKB-SubCell"/>
</dbReference>
<dbReference type="GO" id="GO:0004867">
    <property type="term" value="F:serine-type endopeptidase inhibitor activity"/>
    <property type="evidence" value="ECO:0007669"/>
    <property type="project" value="UniProtKB-KW"/>
</dbReference>
<dbReference type="CDD" id="cd00261">
    <property type="entry name" value="AAI_SS"/>
    <property type="match status" value="1"/>
</dbReference>
<dbReference type="Gene3D" id="1.10.110.10">
    <property type="entry name" value="Plant lipid-transfer and hydrophobic proteins"/>
    <property type="match status" value="1"/>
</dbReference>
<dbReference type="InterPro" id="IPR006106">
    <property type="entry name" value="Allergen/soft/tryp_amyl_inhib"/>
</dbReference>
<dbReference type="InterPro" id="IPR006105">
    <property type="entry name" value="Allergen/tryp_amyl_inhib_CS"/>
</dbReference>
<dbReference type="InterPro" id="IPR036312">
    <property type="entry name" value="Bifun_inhib/LTP/seed_sf"/>
</dbReference>
<dbReference type="InterPro" id="IPR016140">
    <property type="entry name" value="Bifunc_inhib/LTP/seed_store"/>
</dbReference>
<dbReference type="PANTHER" id="PTHR34481:SF10">
    <property type="entry name" value="CHYMOTRYPSIN INHIBITOR WCI"/>
    <property type="match status" value="1"/>
</dbReference>
<dbReference type="PANTHER" id="PTHR34481">
    <property type="entry name" value="TRYPSIN/FACTOR XIIA INHIBITOR-RELATED"/>
    <property type="match status" value="1"/>
</dbReference>
<dbReference type="Pfam" id="PF00234">
    <property type="entry name" value="Tryp_alpha_amyl"/>
    <property type="match status" value="1"/>
</dbReference>
<dbReference type="PRINTS" id="PR00808">
    <property type="entry name" value="AMLASEINHBTR"/>
</dbReference>
<dbReference type="SMART" id="SM00499">
    <property type="entry name" value="AAI"/>
    <property type="match status" value="1"/>
</dbReference>
<dbReference type="SUPFAM" id="SSF47699">
    <property type="entry name" value="Bifunctional inhibitor/lipid-transfer protein/seed storage 2S albumin"/>
    <property type="match status" value="1"/>
</dbReference>
<dbReference type="PROSITE" id="PS00426">
    <property type="entry name" value="CEREAL_TRYP_AMYL_INH"/>
    <property type="match status" value="1"/>
</dbReference>
<organism>
    <name type="scientific">Hordeum vulgare</name>
    <name type="common">Barley</name>
    <dbReference type="NCBI Taxonomy" id="4513"/>
    <lineage>
        <taxon>Eukaryota</taxon>
        <taxon>Viridiplantae</taxon>
        <taxon>Streptophyta</taxon>
        <taxon>Embryophyta</taxon>
        <taxon>Tracheophyta</taxon>
        <taxon>Spermatophyta</taxon>
        <taxon>Magnoliopsida</taxon>
        <taxon>Liliopsida</taxon>
        <taxon>Poales</taxon>
        <taxon>Poaceae</taxon>
        <taxon>BOP clade</taxon>
        <taxon>Pooideae</taxon>
        <taxon>Triticodae</taxon>
        <taxon>Triticeae</taxon>
        <taxon>Hordeinae</taxon>
        <taxon>Hordeum</taxon>
    </lineage>
</organism>
<gene>
    <name type="primary">ITR2</name>
</gene>
<keyword id="KW-0903">Direct protein sequencing</keyword>
<keyword id="KW-0646">Protease inhibitor</keyword>
<keyword id="KW-0964">Secreted</keyword>
<keyword id="KW-0722">Serine protease inhibitor</keyword>
<keyword id="KW-0732">Signal</keyword>
<protein>
    <recommendedName>
        <fullName>Trypsin inhibitor CMc</fullName>
    </recommendedName>
    <alternativeName>
        <fullName>Chloroform/methanol-soluble protein CMc</fullName>
        <shortName>BTICMc</shortName>
    </alternativeName>
</protein>
<sequence>MASCSQHLLSAVAIFSVLAGVATATSIYTCYEGMGLPVNPLQGCRFYVASQTCGAVPLLPIEVMKDWCCRELAGISSNCRCEGLRVFIDRAFPPSQSQGAPPQLPPLATECPAEVKRDFARTLALPGQCNLPAIHGGAYCVFP</sequence>
<comment type="function">
    <text evidence="1">Trypsin inhibitor. No alpha-amylase inhibition detected.</text>
</comment>
<comment type="subcellular location">
    <subcellularLocation>
        <location>Secreted</location>
    </subcellularLocation>
</comment>
<comment type="tissue specificity">
    <text>Endosperm.</text>
</comment>
<comment type="similarity">
    <text evidence="3">Belongs to the protease inhibitor I6 (cereal trypsin/alpha-amylase inhibitor) family.</text>
</comment>
<feature type="signal peptide" evidence="1 2">
    <location>
        <begin position="1"/>
        <end position="24"/>
    </location>
</feature>
<feature type="chain" id="PRO_0000070491" description="Trypsin inhibitor CMc">
    <location>
        <begin position="25"/>
        <end position="143"/>
    </location>
</feature>
<reference key="1">
    <citation type="submission" date="1997-03" db="EMBL/GenBank/DDBJ databases">
        <authorList>
            <person name="Gaddour K."/>
        </authorList>
    </citation>
    <scope>NUCLEOTIDE SEQUENCE [MRNA]</scope>
    <source>
        <strain>cv. Bomi</strain>
        <tissue>Endosperm</tissue>
    </source>
</reference>
<reference key="2">
    <citation type="journal article" date="1984" name="FEBS Lett.">
        <title>N-terminal amino acid sequence of chloroform/methanol-soluble proteins and albumins from endosperm of wheat, barley and related species.</title>
        <authorList>
            <person name="Shewry P.R."/>
            <person name="Lafiandra D."/>
            <person name="Salcedo G."/>
            <person name="Aragoncillo C."/>
            <person name="Garcia-Olmedo F."/>
            <person name="Lew E.J.-L."/>
            <person name="Dietler M.D."/>
            <person name="Kasarda D.D."/>
        </authorList>
    </citation>
    <scope>PROTEIN SEQUENCE OF 25-59</scope>
</reference>
<reference key="3">
    <citation type="journal article" date="1986" name="Biochim. Biophys. Acta">
        <title>New alpha-amylase and trypsin inhibitors among the CM-proteins of barley (Hordeum vulgare).</title>
        <authorList>
            <person name="Barber D."/>
            <person name="Sanchez-Monge R."/>
            <person name="Mendez E."/>
            <person name="Lazaro A."/>
            <person name="Garcia-Olmedo F."/>
            <person name="Salcedo G."/>
        </authorList>
    </citation>
    <scope>PROTEIN SEQUENCE OF 25-53</scope>
    <scope>FUNCTION</scope>
</reference>